<protein>
    <recommendedName>
        <fullName evidence="1">Elongation factor P</fullName>
        <shortName evidence="1">EF-P</shortName>
    </recommendedName>
</protein>
<reference key="1">
    <citation type="journal article" date="2009" name="BMC Genomics">
        <title>Metabolic analysis of the soil microbe Dechloromonas aromatica str. RCB: indications of a surprisingly complex life-style and cryptic anaerobic pathways for aromatic degradation.</title>
        <authorList>
            <person name="Salinero K.K."/>
            <person name="Keller K."/>
            <person name="Feil W.S."/>
            <person name="Feil H."/>
            <person name="Trong S."/>
            <person name="Di Bartolo G."/>
            <person name="Lapidus A."/>
        </authorList>
    </citation>
    <scope>NUCLEOTIDE SEQUENCE [LARGE SCALE GENOMIC DNA]</scope>
    <source>
        <strain>RCB</strain>
    </source>
</reference>
<comment type="function">
    <text evidence="1">Involved in peptide bond synthesis. Stimulates efficient translation and peptide-bond synthesis on native or reconstituted 70S ribosomes in vitro. Probably functions indirectly by altering the affinity of the ribosome for aminoacyl-tRNA, thus increasing their reactivity as acceptors for peptidyl transferase.</text>
</comment>
<comment type="pathway">
    <text evidence="1">Protein biosynthesis; polypeptide chain elongation.</text>
</comment>
<comment type="subcellular location">
    <subcellularLocation>
        <location evidence="1">Cytoplasm</location>
    </subcellularLocation>
</comment>
<comment type="similarity">
    <text evidence="1">Belongs to the elongation factor P family.</text>
</comment>
<gene>
    <name evidence="1" type="primary">efp</name>
    <name type="ordered locus">Daro_2035</name>
</gene>
<feature type="chain" id="PRO_1000010728" description="Elongation factor P">
    <location>
        <begin position="1"/>
        <end position="185"/>
    </location>
</feature>
<name>EFP_DECAR</name>
<dbReference type="EMBL" id="CP000089">
    <property type="protein sequence ID" value="AAZ46780.1"/>
    <property type="molecule type" value="Genomic_DNA"/>
</dbReference>
<dbReference type="SMR" id="Q47EF1"/>
<dbReference type="STRING" id="159087.Daro_2035"/>
<dbReference type="KEGG" id="dar:Daro_2035"/>
<dbReference type="eggNOG" id="COG0231">
    <property type="taxonomic scope" value="Bacteria"/>
</dbReference>
<dbReference type="HOGENOM" id="CLU_074944_2_1_4"/>
<dbReference type="OrthoDB" id="9801844at2"/>
<dbReference type="UniPathway" id="UPA00345"/>
<dbReference type="GO" id="GO:0005737">
    <property type="term" value="C:cytoplasm"/>
    <property type="evidence" value="ECO:0007669"/>
    <property type="project" value="UniProtKB-SubCell"/>
</dbReference>
<dbReference type="GO" id="GO:0003746">
    <property type="term" value="F:translation elongation factor activity"/>
    <property type="evidence" value="ECO:0007669"/>
    <property type="project" value="UniProtKB-UniRule"/>
</dbReference>
<dbReference type="GO" id="GO:0043043">
    <property type="term" value="P:peptide biosynthetic process"/>
    <property type="evidence" value="ECO:0007669"/>
    <property type="project" value="InterPro"/>
</dbReference>
<dbReference type="CDD" id="cd04470">
    <property type="entry name" value="S1_EF-P_repeat_1"/>
    <property type="match status" value="1"/>
</dbReference>
<dbReference type="CDD" id="cd05794">
    <property type="entry name" value="S1_EF-P_repeat_2"/>
    <property type="match status" value="1"/>
</dbReference>
<dbReference type="FunFam" id="2.30.30.30:FF:000003">
    <property type="entry name" value="Elongation factor P"/>
    <property type="match status" value="1"/>
</dbReference>
<dbReference type="FunFam" id="2.40.50.140:FF:000004">
    <property type="entry name" value="Elongation factor P"/>
    <property type="match status" value="1"/>
</dbReference>
<dbReference type="FunFam" id="2.40.50.140:FF:000009">
    <property type="entry name" value="Elongation factor P"/>
    <property type="match status" value="1"/>
</dbReference>
<dbReference type="Gene3D" id="2.30.30.30">
    <property type="match status" value="1"/>
</dbReference>
<dbReference type="Gene3D" id="2.40.50.140">
    <property type="entry name" value="Nucleic acid-binding proteins"/>
    <property type="match status" value="2"/>
</dbReference>
<dbReference type="HAMAP" id="MF_00141">
    <property type="entry name" value="EF_P"/>
    <property type="match status" value="1"/>
</dbReference>
<dbReference type="InterPro" id="IPR015365">
    <property type="entry name" value="Elong-fact-P_C"/>
</dbReference>
<dbReference type="InterPro" id="IPR012340">
    <property type="entry name" value="NA-bd_OB-fold"/>
</dbReference>
<dbReference type="InterPro" id="IPR014722">
    <property type="entry name" value="Rib_uL2_dom2"/>
</dbReference>
<dbReference type="InterPro" id="IPR020599">
    <property type="entry name" value="Transl_elong_fac_P/YeiP"/>
</dbReference>
<dbReference type="InterPro" id="IPR013185">
    <property type="entry name" value="Transl_elong_KOW-like"/>
</dbReference>
<dbReference type="InterPro" id="IPR001059">
    <property type="entry name" value="Transl_elong_P/YeiP_cen"/>
</dbReference>
<dbReference type="InterPro" id="IPR013852">
    <property type="entry name" value="Transl_elong_P/YeiP_CS"/>
</dbReference>
<dbReference type="InterPro" id="IPR011768">
    <property type="entry name" value="Transl_elongation_fac_P"/>
</dbReference>
<dbReference type="InterPro" id="IPR008991">
    <property type="entry name" value="Translation_prot_SH3-like_sf"/>
</dbReference>
<dbReference type="NCBIfam" id="TIGR00038">
    <property type="entry name" value="efp"/>
    <property type="match status" value="1"/>
</dbReference>
<dbReference type="NCBIfam" id="NF001810">
    <property type="entry name" value="PRK00529.1"/>
    <property type="match status" value="1"/>
</dbReference>
<dbReference type="PANTHER" id="PTHR30053">
    <property type="entry name" value="ELONGATION FACTOR P"/>
    <property type="match status" value="1"/>
</dbReference>
<dbReference type="PANTHER" id="PTHR30053:SF12">
    <property type="entry name" value="ELONGATION FACTOR P (EF-P) FAMILY PROTEIN"/>
    <property type="match status" value="1"/>
</dbReference>
<dbReference type="Pfam" id="PF01132">
    <property type="entry name" value="EFP"/>
    <property type="match status" value="1"/>
</dbReference>
<dbReference type="Pfam" id="PF08207">
    <property type="entry name" value="EFP_N"/>
    <property type="match status" value="1"/>
</dbReference>
<dbReference type="Pfam" id="PF09285">
    <property type="entry name" value="Elong-fact-P_C"/>
    <property type="match status" value="1"/>
</dbReference>
<dbReference type="PIRSF" id="PIRSF005901">
    <property type="entry name" value="EF-P"/>
    <property type="match status" value="1"/>
</dbReference>
<dbReference type="SMART" id="SM01185">
    <property type="entry name" value="EFP"/>
    <property type="match status" value="1"/>
</dbReference>
<dbReference type="SMART" id="SM00841">
    <property type="entry name" value="Elong-fact-P_C"/>
    <property type="match status" value="1"/>
</dbReference>
<dbReference type="SUPFAM" id="SSF50249">
    <property type="entry name" value="Nucleic acid-binding proteins"/>
    <property type="match status" value="2"/>
</dbReference>
<dbReference type="SUPFAM" id="SSF50104">
    <property type="entry name" value="Translation proteins SH3-like domain"/>
    <property type="match status" value="1"/>
</dbReference>
<dbReference type="PROSITE" id="PS01275">
    <property type="entry name" value="EFP"/>
    <property type="match status" value="1"/>
</dbReference>
<evidence type="ECO:0000255" key="1">
    <source>
        <dbReference type="HAMAP-Rule" id="MF_00141"/>
    </source>
</evidence>
<keyword id="KW-0963">Cytoplasm</keyword>
<keyword id="KW-0251">Elongation factor</keyword>
<keyword id="KW-0648">Protein biosynthesis</keyword>
<organism>
    <name type="scientific">Dechloromonas aromatica (strain RCB)</name>
    <dbReference type="NCBI Taxonomy" id="159087"/>
    <lineage>
        <taxon>Bacteria</taxon>
        <taxon>Pseudomonadati</taxon>
        <taxon>Pseudomonadota</taxon>
        <taxon>Betaproteobacteria</taxon>
        <taxon>Rhodocyclales</taxon>
        <taxon>Azonexaceae</taxon>
        <taxon>Dechloromonas</taxon>
    </lineage>
</organism>
<proteinExistence type="inferred from homology"/>
<accession>Q47EF1</accession>
<sequence>MKTAMELRSGNVIMVGADPLVVQKSEYNKSGRNAAVVKMKLKNLLTGAASEAVYKADDKFEVVVLDKKEVTYSYFADPMYVFMDADYEQFEVEAENMTDALKYLEDGLACEVVFYNGKAISVELPNSVVREVVYTEPAVKGDTSGKVMKPAKLATGFELPVPAFVSIGDKIEIDTRTDEYKNRVK</sequence>